<gene>
    <name type="ordered locus">At2g20490</name>
    <name type="ORF">T13C7.8</name>
</gene>
<protein>
    <recommendedName>
        <fullName>H/ACA ribonucleoprotein complex subunit 3-like protein</fullName>
    </recommendedName>
    <alternativeName>
        <fullName>Nucleolar protein 10</fullName>
    </alternativeName>
</protein>
<keyword id="KW-0025">Alternative splicing</keyword>
<keyword id="KW-0539">Nucleus</keyword>
<keyword id="KW-1185">Reference proteome</keyword>
<keyword id="KW-0687">Ribonucleoprotein</keyword>
<keyword id="KW-0690">Ribosome biogenesis</keyword>
<keyword id="KW-0698">rRNA processing</keyword>
<feature type="chain" id="PRO_0000149007" description="H/ACA ribonucleoprotein complex subunit 3-like protein">
    <location>
        <begin position="1"/>
        <end position="64"/>
    </location>
</feature>
<feature type="sequence conflict" description="In Ref. 3; AAK96847/AAN65065." evidence="2" ref="3">
    <original>S</original>
    <variation>P</variation>
    <location>
        <position position="36"/>
    </location>
</feature>
<accession>Q93XX8</accession>
<accession>Q9SIM0</accession>
<proteinExistence type="inferred from homology"/>
<comment type="function">
    <text evidence="1">Required for ribosome biogenesis. Part of a complex which catalyzes pseudouridylation of rRNA. This involves the isomerization of uridine such that the ribose is subsequently attached to C5, instead of the normal N1. Pseudouridine ('psi') residues may serve to stabilize the conformation of rRNAs (By similarity).</text>
</comment>
<comment type="subunit">
    <text evidence="1">Component of the small nucleolar ribonucleoprotein particles containing H/ACA-type snoRNAs (H/ACA snoRNPs).</text>
</comment>
<comment type="subcellular location">
    <subcellularLocation>
        <location evidence="1">Nucleus</location>
        <location evidence="1">Nucleolus</location>
    </subcellularLocation>
</comment>
<comment type="alternative products">
    <event type="alternative splicing"/>
    <isoform>
        <id>Q93XX8-1</id>
        <name>1</name>
        <sequence type="displayed"/>
    </isoform>
    <text>A number of isoforms are produced. According to EST sequences.</text>
</comment>
<comment type="similarity">
    <text evidence="2">Belongs to the NOP10 family.</text>
</comment>
<evidence type="ECO:0000250" key="1"/>
<evidence type="ECO:0000305" key="2"/>
<organism>
    <name type="scientific">Arabidopsis thaliana</name>
    <name type="common">Mouse-ear cress</name>
    <dbReference type="NCBI Taxonomy" id="3702"/>
    <lineage>
        <taxon>Eukaryota</taxon>
        <taxon>Viridiplantae</taxon>
        <taxon>Streptophyta</taxon>
        <taxon>Embryophyta</taxon>
        <taxon>Tracheophyta</taxon>
        <taxon>Spermatophyta</taxon>
        <taxon>Magnoliopsida</taxon>
        <taxon>eudicotyledons</taxon>
        <taxon>Gunneridae</taxon>
        <taxon>Pentapetalae</taxon>
        <taxon>rosids</taxon>
        <taxon>malvids</taxon>
        <taxon>Brassicales</taxon>
        <taxon>Brassicaceae</taxon>
        <taxon>Camelineae</taxon>
        <taxon>Arabidopsis</taxon>
    </lineage>
</organism>
<reference key="1">
    <citation type="journal article" date="1999" name="Nature">
        <title>Sequence and analysis of chromosome 2 of the plant Arabidopsis thaliana.</title>
        <authorList>
            <person name="Lin X."/>
            <person name="Kaul S."/>
            <person name="Rounsley S.D."/>
            <person name="Shea T.P."/>
            <person name="Benito M.-I."/>
            <person name="Town C.D."/>
            <person name="Fujii C.Y."/>
            <person name="Mason T.M."/>
            <person name="Bowman C.L."/>
            <person name="Barnstead M.E."/>
            <person name="Feldblyum T.V."/>
            <person name="Buell C.R."/>
            <person name="Ketchum K.A."/>
            <person name="Lee J.J."/>
            <person name="Ronning C.M."/>
            <person name="Koo H.L."/>
            <person name="Moffat K.S."/>
            <person name="Cronin L.A."/>
            <person name="Shen M."/>
            <person name="Pai G."/>
            <person name="Van Aken S."/>
            <person name="Umayam L."/>
            <person name="Tallon L.J."/>
            <person name="Gill J.E."/>
            <person name="Adams M.D."/>
            <person name="Carrera A.J."/>
            <person name="Creasy T.H."/>
            <person name="Goodman H.M."/>
            <person name="Somerville C.R."/>
            <person name="Copenhaver G.P."/>
            <person name="Preuss D."/>
            <person name="Nierman W.C."/>
            <person name="White O."/>
            <person name="Eisen J.A."/>
            <person name="Salzberg S.L."/>
            <person name="Fraser C.M."/>
            <person name="Venter J.C."/>
        </authorList>
    </citation>
    <scope>NUCLEOTIDE SEQUENCE [LARGE SCALE GENOMIC DNA]</scope>
    <source>
        <strain>cv. Columbia</strain>
    </source>
</reference>
<reference key="2">
    <citation type="journal article" date="2017" name="Plant J.">
        <title>Araport11: a complete reannotation of the Arabidopsis thaliana reference genome.</title>
        <authorList>
            <person name="Cheng C.Y."/>
            <person name="Krishnakumar V."/>
            <person name="Chan A.P."/>
            <person name="Thibaud-Nissen F."/>
            <person name="Schobel S."/>
            <person name="Town C.D."/>
        </authorList>
    </citation>
    <scope>GENOME REANNOTATION</scope>
    <source>
        <strain>cv. Columbia</strain>
    </source>
</reference>
<reference key="3">
    <citation type="journal article" date="2003" name="Science">
        <title>Empirical analysis of transcriptional activity in the Arabidopsis genome.</title>
        <authorList>
            <person name="Yamada K."/>
            <person name="Lim J."/>
            <person name="Dale J.M."/>
            <person name="Chen H."/>
            <person name="Shinn P."/>
            <person name="Palm C.J."/>
            <person name="Southwick A.M."/>
            <person name="Wu H.C."/>
            <person name="Kim C.J."/>
            <person name="Nguyen M."/>
            <person name="Pham P.K."/>
            <person name="Cheuk R.F."/>
            <person name="Karlin-Newmann G."/>
            <person name="Liu S.X."/>
            <person name="Lam B."/>
            <person name="Sakano H."/>
            <person name="Wu T."/>
            <person name="Yu G."/>
            <person name="Miranda M."/>
            <person name="Quach H.L."/>
            <person name="Tripp M."/>
            <person name="Chang C.H."/>
            <person name="Lee J.M."/>
            <person name="Toriumi M.J."/>
            <person name="Chan M.M."/>
            <person name="Tang C.C."/>
            <person name="Onodera C.S."/>
            <person name="Deng J.M."/>
            <person name="Akiyama K."/>
            <person name="Ansari Y."/>
            <person name="Arakawa T."/>
            <person name="Banh J."/>
            <person name="Banno F."/>
            <person name="Bowser L."/>
            <person name="Brooks S.Y."/>
            <person name="Carninci P."/>
            <person name="Chao Q."/>
            <person name="Choy N."/>
            <person name="Enju A."/>
            <person name="Goldsmith A.D."/>
            <person name="Gurjal M."/>
            <person name="Hansen N.F."/>
            <person name="Hayashizaki Y."/>
            <person name="Johnson-Hopson C."/>
            <person name="Hsuan V.W."/>
            <person name="Iida K."/>
            <person name="Karnes M."/>
            <person name="Khan S."/>
            <person name="Koesema E."/>
            <person name="Ishida J."/>
            <person name="Jiang P.X."/>
            <person name="Jones T."/>
            <person name="Kawai J."/>
            <person name="Kamiya A."/>
            <person name="Meyers C."/>
            <person name="Nakajima M."/>
            <person name="Narusaka M."/>
            <person name="Seki M."/>
            <person name="Sakurai T."/>
            <person name="Satou M."/>
            <person name="Tamse R."/>
            <person name="Vaysberg M."/>
            <person name="Wallender E.K."/>
            <person name="Wong C."/>
            <person name="Yamamura Y."/>
            <person name="Yuan S."/>
            <person name="Shinozaki K."/>
            <person name="Davis R.W."/>
            <person name="Theologis A."/>
            <person name="Ecker J.R."/>
        </authorList>
    </citation>
    <scope>NUCLEOTIDE SEQUENCE [LARGE SCALE MRNA]</scope>
    <source>
        <strain>cv. Columbia</strain>
    </source>
</reference>
<reference key="4">
    <citation type="submission" date="2002-03" db="EMBL/GenBank/DDBJ databases">
        <title>Full-length cDNA from Arabidopsis thaliana.</title>
        <authorList>
            <person name="Brover V.V."/>
            <person name="Troukhan M.E."/>
            <person name="Alexandrov N.A."/>
            <person name="Lu Y.-P."/>
            <person name="Flavell R.B."/>
            <person name="Feldmann K.A."/>
        </authorList>
    </citation>
    <scope>NUCLEOTIDE SEQUENCE [LARGE SCALE MRNA]</scope>
</reference>
<sequence>MYLQCYINEKGEKVYTTKKESPLGLATESAHPARFSPDDKYSKQRVLLKKRFGLLPTQNAPLQY</sequence>
<dbReference type="EMBL" id="AC007109">
    <property type="protein sequence ID" value="AAD25649.1"/>
    <property type="molecule type" value="Genomic_DNA"/>
</dbReference>
<dbReference type="EMBL" id="CP002685">
    <property type="protein sequence ID" value="AEC07015.1"/>
    <property type="molecule type" value="Genomic_DNA"/>
</dbReference>
<dbReference type="EMBL" id="CP002685">
    <property type="protein sequence ID" value="ANM63113.1"/>
    <property type="molecule type" value="Genomic_DNA"/>
</dbReference>
<dbReference type="EMBL" id="AY054656">
    <property type="protein sequence ID" value="AAK96847.1"/>
    <property type="molecule type" value="mRNA"/>
</dbReference>
<dbReference type="EMBL" id="BT001178">
    <property type="protein sequence ID" value="AAN65065.1"/>
    <property type="molecule type" value="mRNA"/>
</dbReference>
<dbReference type="EMBL" id="AY087879">
    <property type="protein sequence ID" value="AAM65431.1"/>
    <property type="molecule type" value="mRNA"/>
</dbReference>
<dbReference type="PIR" id="H84589">
    <property type="entry name" value="H84589"/>
</dbReference>
<dbReference type="RefSeq" id="NP_001325224.1">
    <molecule id="Q93XX8-1"/>
    <property type="nucleotide sequence ID" value="NM_001335686.1"/>
</dbReference>
<dbReference type="RefSeq" id="NP_565472.1">
    <molecule id="Q93XX8-1"/>
    <property type="nucleotide sequence ID" value="NM_127608.4"/>
</dbReference>
<dbReference type="SMR" id="Q93XX8"/>
<dbReference type="FunCoup" id="Q93XX8">
    <property type="interactions" value="3135"/>
</dbReference>
<dbReference type="IntAct" id="Q93XX8">
    <property type="interactions" value="1"/>
</dbReference>
<dbReference type="STRING" id="3702.Q93XX8"/>
<dbReference type="PaxDb" id="3702-AT2G20490.1"/>
<dbReference type="ProteomicsDB" id="250595">
    <molecule id="Q93XX8-1"/>
</dbReference>
<dbReference type="EnsemblPlants" id="AT2G20490.1">
    <molecule id="Q93XX8-1"/>
    <property type="protein sequence ID" value="AT2G20490.1"/>
    <property type="gene ID" value="AT2G20490"/>
</dbReference>
<dbReference type="EnsemblPlants" id="AT2G20490.3">
    <molecule id="Q93XX8-1"/>
    <property type="protein sequence ID" value="AT2G20490.3"/>
    <property type="gene ID" value="AT2G20490"/>
</dbReference>
<dbReference type="GeneID" id="816569"/>
<dbReference type="Gramene" id="AT2G20490.1">
    <molecule id="Q93XX8-1"/>
    <property type="protein sequence ID" value="AT2G20490.1"/>
    <property type="gene ID" value="AT2G20490"/>
</dbReference>
<dbReference type="Gramene" id="AT2G20490.3">
    <molecule id="Q93XX8-1"/>
    <property type="protein sequence ID" value="AT2G20490.3"/>
    <property type="gene ID" value="AT2G20490"/>
</dbReference>
<dbReference type="KEGG" id="ath:AT2G20490"/>
<dbReference type="Araport" id="AT2G20490"/>
<dbReference type="TAIR" id="AT2G20490">
    <property type="gene designation" value="NOP10"/>
</dbReference>
<dbReference type="eggNOG" id="KOG3503">
    <property type="taxonomic scope" value="Eukaryota"/>
</dbReference>
<dbReference type="HOGENOM" id="CLU_184680_1_0_1"/>
<dbReference type="InParanoid" id="Q93XX8"/>
<dbReference type="OMA" id="MYVLDKD"/>
<dbReference type="OrthoDB" id="13807at2759"/>
<dbReference type="PhylomeDB" id="Q93XX8"/>
<dbReference type="CD-CODE" id="4299E36E">
    <property type="entry name" value="Nucleolus"/>
</dbReference>
<dbReference type="PRO" id="PR:Q93XX8"/>
<dbReference type="Proteomes" id="UP000006548">
    <property type="component" value="Chromosome 2"/>
</dbReference>
<dbReference type="ExpressionAtlas" id="Q93XX8">
    <property type="expression patterns" value="baseline and differential"/>
</dbReference>
<dbReference type="GO" id="GO:0015030">
    <property type="term" value="C:Cajal body"/>
    <property type="evidence" value="ECO:0000314"/>
    <property type="project" value="TAIR"/>
</dbReference>
<dbReference type="GO" id="GO:0005739">
    <property type="term" value="C:mitochondrion"/>
    <property type="evidence" value="ECO:0007005"/>
    <property type="project" value="TAIR"/>
</dbReference>
<dbReference type="GO" id="GO:0005730">
    <property type="term" value="C:nucleolus"/>
    <property type="evidence" value="ECO:0000314"/>
    <property type="project" value="TAIR"/>
</dbReference>
<dbReference type="GO" id="GO:1990904">
    <property type="term" value="C:ribonucleoprotein complex"/>
    <property type="evidence" value="ECO:0007669"/>
    <property type="project" value="UniProtKB-KW"/>
</dbReference>
<dbReference type="GO" id="GO:0030515">
    <property type="term" value="F:snoRNA binding"/>
    <property type="evidence" value="ECO:0007669"/>
    <property type="project" value="InterPro"/>
</dbReference>
<dbReference type="GO" id="GO:0010197">
    <property type="term" value="P:polar nucleus fusion"/>
    <property type="evidence" value="ECO:0000315"/>
    <property type="project" value="TAIR"/>
</dbReference>
<dbReference type="GO" id="GO:0001522">
    <property type="term" value="P:pseudouridine synthesis"/>
    <property type="evidence" value="ECO:0007669"/>
    <property type="project" value="InterPro"/>
</dbReference>
<dbReference type="GO" id="GO:0006364">
    <property type="term" value="P:rRNA processing"/>
    <property type="evidence" value="ECO:0007669"/>
    <property type="project" value="UniProtKB-KW"/>
</dbReference>
<dbReference type="FunFam" id="2.20.28.40:FF:000001">
    <property type="entry name" value="H/ACA ribonucleoprotein complex subunit 3"/>
    <property type="match status" value="1"/>
</dbReference>
<dbReference type="Gene3D" id="2.20.28.40">
    <property type="entry name" value="H/ACA ribonucleoprotein complex, subunit Nop10"/>
    <property type="match status" value="1"/>
</dbReference>
<dbReference type="InterPro" id="IPR007264">
    <property type="entry name" value="H/ACA_rnp_Nop10"/>
</dbReference>
<dbReference type="InterPro" id="IPR036756">
    <property type="entry name" value="H/ACA_rnp_Nop10_sf"/>
</dbReference>
<dbReference type="PANTHER" id="PTHR13305:SF6">
    <property type="entry name" value="H_ACA RIBONUCLEOPROTEIN COMPLEX SUBUNIT 3-LIKE PROTEIN"/>
    <property type="match status" value="1"/>
</dbReference>
<dbReference type="PANTHER" id="PTHR13305">
    <property type="entry name" value="RIBOSOME BIOGENESIS PROTEIN NOP10"/>
    <property type="match status" value="1"/>
</dbReference>
<dbReference type="Pfam" id="PF04135">
    <property type="entry name" value="Nop10p"/>
    <property type="match status" value="1"/>
</dbReference>
<dbReference type="SUPFAM" id="SSF144210">
    <property type="entry name" value="Nop10-like SnoRNP"/>
    <property type="match status" value="1"/>
</dbReference>
<name>NOP10_ARATH</name>